<organism>
    <name type="scientific">Staphylococcus aureus (strain NCTC 8325 / PS 47)</name>
    <dbReference type="NCBI Taxonomy" id="93061"/>
    <lineage>
        <taxon>Bacteria</taxon>
        <taxon>Bacillati</taxon>
        <taxon>Bacillota</taxon>
        <taxon>Bacilli</taxon>
        <taxon>Bacillales</taxon>
        <taxon>Staphylococcaceae</taxon>
        <taxon>Staphylococcus</taxon>
    </lineage>
</organism>
<reference key="1">
    <citation type="book" date="2006" name="Gram positive pathogens, 2nd edition">
        <title>The Staphylococcus aureus NCTC 8325 genome.</title>
        <editorList>
            <person name="Fischetti V."/>
            <person name="Novick R."/>
            <person name="Ferretti J."/>
            <person name="Portnoy D."/>
            <person name="Rood J."/>
        </editorList>
        <authorList>
            <person name="Gillaspy A.F."/>
            <person name="Worrell V."/>
            <person name="Orvis J."/>
            <person name="Roe B.A."/>
            <person name="Dyer D.W."/>
            <person name="Iandolo J.J."/>
        </authorList>
    </citation>
    <scope>NUCLEOTIDE SEQUENCE [LARGE SCALE GENOMIC DNA]</scope>
    <source>
        <strain>NCTC 8325 / PS 47</strain>
    </source>
</reference>
<reference key="2">
    <citation type="journal article" date="2000" name="Mol. Microbiol.">
        <title>Identification and characterization of SarH1, a new global regulator of virulence gene expression in Staphylococcus aureus.</title>
        <authorList>
            <person name="Tegmark K."/>
            <person name="Karlsson A."/>
            <person name="Arvidson S."/>
        </authorList>
    </citation>
    <scope>PROTEIN SEQUENCE OF 1-10</scope>
    <scope>FUNCTION</scope>
    <scope>GROWTH PHASE-DEPENDENT EXPRESSION</scope>
</reference>
<reference key="3">
    <citation type="journal article" date="2001" name="Infect. Immun.">
        <title>SarS, a SarA homolog repressible by agr, is an activator of protein A synthesis in Staphylococcus aureus.</title>
        <authorList>
            <person name="Cheung A.L."/>
            <person name="Schmidt K.A."/>
            <person name="Bateman B."/>
            <person name="Manna A.C."/>
        </authorList>
    </citation>
    <scope>FUNCTION</scope>
</reference>
<reference key="4">
    <citation type="journal article" date="2003" name="Infect. Immun.">
        <title>SarT influences sarS expression in Staphylococcus aureus.</title>
        <authorList>
            <person name="Schmidt K.A."/>
            <person name="Manna A.C."/>
            <person name="Cheung A.L."/>
        </authorList>
    </citation>
    <scope>REGULATION BY SART</scope>
</reference>
<reference key="5">
    <citation type="journal article" date="2003" name="J. Bacteriol.">
        <title>Global regulation of Staphylococcus aureus genes by Rot.</title>
        <authorList>
            <person name="Said-Salim B."/>
            <person name="Dunman P.M."/>
            <person name="McAleese F.M."/>
            <person name="Macapagal D."/>
            <person name="Murphy E."/>
            <person name="McNamara P.J."/>
            <person name="Arvidson S."/>
            <person name="Foster T.J."/>
            <person name="Projan S.J."/>
            <person name="Kreiswirth B.N."/>
        </authorList>
    </citation>
    <scope>REGULATION BY ROT</scope>
</reference>
<reference key="6">
    <citation type="journal article" date="2004" name="J. Bacteriol.">
        <title>TcaR, a putative MarR-like regulator of sarS expression.</title>
        <authorList>
            <person name="McCallum N."/>
            <person name="Bischoff M."/>
            <person name="Maki H."/>
            <person name="Wada A."/>
            <person name="Berger-Baechi B."/>
        </authorList>
    </citation>
    <scope>STRAIN-DEPENDENT DIFFERENCES IN REGULATION BY TCAR</scope>
</reference>
<reference key="7">
    <citation type="journal article" date="2004" name="J. Bacteriol.">
        <title>Regulatory elements of the Staphylococcus aureus protein A (Spa) promoter.</title>
        <authorList>
            <person name="Gao J."/>
            <person name="Stewart G.C."/>
        </authorList>
    </citation>
    <scope>MODEL FOR SPA PROMOTER REGULATION</scope>
</reference>
<reference key="8">
    <citation type="journal article" date="2005" name="Infect. Immun.">
        <title>Rat/MgrA, a regulator of autolysis, is a regulator of virulence genes in Staphylococcus aureus.</title>
        <authorList>
            <person name="Ingavale S.S."/>
            <person name="van Wamel W."/>
            <person name="Luong T.T."/>
            <person name="Lee C.Y."/>
            <person name="Cheung A.L."/>
        </authorList>
    </citation>
    <scope>REGULATION BY MGRA</scope>
</reference>
<reference key="9">
    <citation type="journal article" date="2005" name="Int. J. Med. Microbiol.">
        <title>Regulatory role of proteins binding to the spa (protein A) and sarS (staphylococcal accessory regulator) promoter regions in Staphylococcus aureus NTCC 8325-4.</title>
        <authorList>
            <person name="Oscarsson J."/>
            <person name="Harlos C."/>
            <person name="Arvidson S."/>
        </authorList>
    </citation>
    <scope>IDENTIFICATION BY MASS SPECTROMETRY</scope>
    <scope>OVERVIEW OF SARS AND SPA REGULATION</scope>
</reference>
<reference key="10">
    <citation type="journal article" date="2003" name="J. Bacteriol.">
        <title>Crystal structure of the SarS protein from Staphylococcus aureus.</title>
        <authorList>
            <person name="Li R."/>
            <person name="Manna A.C."/>
            <person name="Dai S."/>
            <person name="Cheung A.L."/>
            <person name="Zhang G."/>
        </authorList>
    </citation>
    <scope>X-RAY CRYSTALLOGRAPHY (2.2 ANGSTROMS)</scope>
</reference>
<name>SARS_STAA8</name>
<keyword id="KW-0002">3D-structure</keyword>
<keyword id="KW-0010">Activator</keyword>
<keyword id="KW-0963">Cytoplasm</keyword>
<keyword id="KW-0903">Direct protein sequencing</keyword>
<keyword id="KW-0238">DNA-binding</keyword>
<keyword id="KW-1185">Reference proteome</keyword>
<keyword id="KW-0677">Repeat</keyword>
<keyword id="KW-0678">Repressor</keyword>
<keyword id="KW-0804">Transcription</keyword>
<keyword id="KW-0805">Transcription regulation</keyword>
<keyword id="KW-0843">Virulence</keyword>
<comment type="function">
    <text evidence="2 3">Transcriptional regulator that controls expression of some virulence factors in a cell density-dependent manner. Acts as an activator of the gene encoding protein A (spa). Negatively regulates the expression of alpha-hemolysin (hla).</text>
</comment>
<comment type="subcellular location">
    <subcellularLocation>
        <location>Cytoplasm</location>
    </subcellularLocation>
</comment>
<comment type="induction">
    <text>Expressed at the early exponential growth phase, decreases through exponential phase and reaches a steady-state level at post-exponential phase. Repressed by MgrA and SarA. Activated by Rot and SarT. Transcription is also dependent on SigA and SigB factors. Is activated by SigB in strains harboring an intact sigB operon (rsbU, rsbV, rsbW, and sigB).</text>
</comment>
<comment type="miscellaneous">
    <text>Mutational analysis of the spa promoter suggests that SarS might stimulate spa transcription by competing with SarA.</text>
</comment>
<comment type="miscellaneous">
    <text>The regulatory events observed in strain NCTC 8325 are not representative of the events that occur in clinical isolates of S.aureus.</text>
</comment>
<comment type="similarity">
    <text evidence="4">Belongs to the SarA family.</text>
</comment>
<proteinExistence type="evidence at protein level"/>
<sequence>MKYNNHDKIRDFIIIEAYMFRFKKKVKPEVDMTIKEFILLTYLFHQQENTLPFKKIVSDLCYKQSDLVQHIKVLVKHSYISKVRSKIDERNTYISISEEQREKIAERVTLFDQIIKQFNLADQSESQMIPKDSKEFLNLMMYTMYFKNIIKKHLTLSFVEFTILAIITSQNKNIVLLKDLIETIHHKYPQTVRALNNLKKQGYLIKERSTEDERKILIHMDDAQQDHAEQLLAQVNQLLADKDHLHLVFE</sequence>
<feature type="chain" id="PRO_0000249329" description="HTH-type transcriptional regulator SarS">
    <location>
        <begin position="1"/>
        <end position="250"/>
    </location>
</feature>
<feature type="DNA-binding region" description="H-T-H motif" evidence="1">
    <location>
        <begin position="53"/>
        <end position="76"/>
    </location>
</feature>
<feature type="DNA-binding region" description="H-T-H motif" evidence="1">
    <location>
        <begin position="177"/>
        <end position="200"/>
    </location>
</feature>
<feature type="helix" evidence="5">
    <location>
        <begin position="8"/>
        <end position="26"/>
    </location>
</feature>
<feature type="turn" evidence="5">
    <location>
        <begin position="27"/>
        <end position="29"/>
    </location>
</feature>
<feature type="helix" evidence="5">
    <location>
        <begin position="34"/>
        <end position="44"/>
    </location>
</feature>
<feature type="strand" evidence="5">
    <location>
        <begin position="49"/>
        <end position="52"/>
    </location>
</feature>
<feature type="helix" evidence="5">
    <location>
        <begin position="53"/>
        <end position="59"/>
    </location>
</feature>
<feature type="strand" evidence="5">
    <location>
        <begin position="60"/>
        <end position="62"/>
    </location>
</feature>
<feature type="helix" evidence="5">
    <location>
        <begin position="64"/>
        <end position="66"/>
    </location>
</feature>
<feature type="helix" evidence="5">
    <location>
        <begin position="68"/>
        <end position="76"/>
    </location>
</feature>
<feature type="strand" evidence="5">
    <location>
        <begin position="81"/>
        <end position="84"/>
    </location>
</feature>
<feature type="strand" evidence="5">
    <location>
        <begin position="86"/>
        <end position="88"/>
    </location>
</feature>
<feature type="strand" evidence="5">
    <location>
        <begin position="91"/>
        <end position="95"/>
    </location>
</feature>
<feature type="helix" evidence="5">
    <location>
        <begin position="98"/>
        <end position="121"/>
    </location>
</feature>
<feature type="helix" evidence="5">
    <location>
        <begin position="133"/>
        <end position="153"/>
    </location>
</feature>
<feature type="helix" evidence="5">
    <location>
        <begin position="158"/>
        <end position="168"/>
    </location>
</feature>
<feature type="turn" evidence="5">
    <location>
        <begin position="169"/>
        <end position="172"/>
    </location>
</feature>
<feature type="helix" evidence="5">
    <location>
        <begin position="177"/>
        <end position="183"/>
    </location>
</feature>
<feature type="strand" evidence="5">
    <location>
        <begin position="184"/>
        <end position="186"/>
    </location>
</feature>
<feature type="helix" evidence="5">
    <location>
        <begin position="188"/>
        <end position="201"/>
    </location>
</feature>
<feature type="strand" evidence="5">
    <location>
        <begin position="203"/>
        <end position="208"/>
    </location>
</feature>
<feature type="strand" evidence="5">
    <location>
        <begin position="210"/>
        <end position="212"/>
    </location>
</feature>
<feature type="strand" evidence="5">
    <location>
        <begin position="216"/>
        <end position="219"/>
    </location>
</feature>
<feature type="helix" evidence="5">
    <location>
        <begin position="222"/>
        <end position="238"/>
    </location>
</feature>
<feature type="strand" evidence="5">
    <location>
        <begin position="240"/>
        <end position="242"/>
    </location>
</feature>
<feature type="helix" evidence="5">
    <location>
        <begin position="244"/>
        <end position="246"/>
    </location>
</feature>
<protein>
    <recommendedName>
        <fullName>HTH-type transcriptional regulator SarS</fullName>
    </recommendedName>
    <alternativeName>
        <fullName>Staphylococcal accessory regulator S</fullName>
    </alternativeName>
</protein>
<dbReference type="EMBL" id="CP000253">
    <property type="protein sequence ID" value="ABD29254.1"/>
    <property type="molecule type" value="Genomic_DNA"/>
</dbReference>
<dbReference type="RefSeq" id="WP_000876756.1">
    <property type="nucleotide sequence ID" value="NZ_LS483365.1"/>
</dbReference>
<dbReference type="RefSeq" id="YP_498671.1">
    <property type="nucleotide sequence ID" value="NC_007795.1"/>
</dbReference>
<dbReference type="PDB" id="1P4X">
    <property type="method" value="X-ray"/>
    <property type="resolution" value="2.20 A"/>
    <property type="chains" value="A=1-250"/>
</dbReference>
<dbReference type="PDBsum" id="1P4X"/>
<dbReference type="SMR" id="Q2G1N7"/>
<dbReference type="STRING" id="93061.SAOUHSC_00070"/>
<dbReference type="PaxDb" id="1280-SAXN108_0097"/>
<dbReference type="GeneID" id="3919449"/>
<dbReference type="KEGG" id="sao:SAOUHSC_00070"/>
<dbReference type="PATRIC" id="fig|93061.5.peg.60"/>
<dbReference type="eggNOG" id="COG1846">
    <property type="taxonomic scope" value="Bacteria"/>
</dbReference>
<dbReference type="HOGENOM" id="CLU_097164_0_0_9"/>
<dbReference type="OrthoDB" id="9799663at2"/>
<dbReference type="EvolutionaryTrace" id="Q2G1N7"/>
<dbReference type="PRO" id="PR:Q2G1N7"/>
<dbReference type="Proteomes" id="UP000008816">
    <property type="component" value="Chromosome"/>
</dbReference>
<dbReference type="GO" id="GO:0005737">
    <property type="term" value="C:cytoplasm"/>
    <property type="evidence" value="ECO:0007669"/>
    <property type="project" value="UniProtKB-SubCell"/>
</dbReference>
<dbReference type="GO" id="GO:0003677">
    <property type="term" value="F:DNA binding"/>
    <property type="evidence" value="ECO:0007669"/>
    <property type="project" value="UniProtKB-KW"/>
</dbReference>
<dbReference type="GO" id="GO:0003700">
    <property type="term" value="F:DNA-binding transcription factor activity"/>
    <property type="evidence" value="ECO:0007669"/>
    <property type="project" value="InterPro"/>
</dbReference>
<dbReference type="GO" id="GO:0006355">
    <property type="term" value="P:regulation of DNA-templated transcription"/>
    <property type="evidence" value="ECO:0000318"/>
    <property type="project" value="GO_Central"/>
</dbReference>
<dbReference type="GO" id="GO:0006950">
    <property type="term" value="P:response to stress"/>
    <property type="evidence" value="ECO:0000318"/>
    <property type="project" value="GO_Central"/>
</dbReference>
<dbReference type="Gene3D" id="1.10.10.10">
    <property type="entry name" value="Winged helix-like DNA-binding domain superfamily/Winged helix DNA-binding domain"/>
    <property type="match status" value="2"/>
</dbReference>
<dbReference type="InterPro" id="IPR000835">
    <property type="entry name" value="HTH_MarR-typ"/>
</dbReference>
<dbReference type="InterPro" id="IPR039422">
    <property type="entry name" value="MarR/SlyA-like"/>
</dbReference>
<dbReference type="InterPro" id="IPR010166">
    <property type="entry name" value="SarA/Rot_dom"/>
</dbReference>
<dbReference type="InterPro" id="IPR055166">
    <property type="entry name" value="Transc_reg_Sar_Rot_HTH"/>
</dbReference>
<dbReference type="InterPro" id="IPR036388">
    <property type="entry name" value="WH-like_DNA-bd_sf"/>
</dbReference>
<dbReference type="InterPro" id="IPR036390">
    <property type="entry name" value="WH_DNA-bd_sf"/>
</dbReference>
<dbReference type="NCBIfam" id="TIGR01889">
    <property type="entry name" value="Staph_reg_Sar"/>
    <property type="match status" value="2"/>
</dbReference>
<dbReference type="PANTHER" id="PTHR33164:SF5">
    <property type="entry name" value="ORGANIC HYDROPEROXIDE RESISTANCE TRANSCRIPTIONAL REGULATOR"/>
    <property type="match status" value="1"/>
</dbReference>
<dbReference type="PANTHER" id="PTHR33164">
    <property type="entry name" value="TRANSCRIPTIONAL REGULATOR, MARR FAMILY"/>
    <property type="match status" value="1"/>
</dbReference>
<dbReference type="Pfam" id="PF22381">
    <property type="entry name" value="Staph_reg_Sar_Rot"/>
    <property type="match status" value="2"/>
</dbReference>
<dbReference type="SMART" id="SM00347">
    <property type="entry name" value="HTH_MARR"/>
    <property type="match status" value="2"/>
</dbReference>
<dbReference type="SUPFAM" id="SSF46785">
    <property type="entry name" value="Winged helix' DNA-binding domain"/>
    <property type="match status" value="2"/>
</dbReference>
<accession>Q2G1N7</accession>
<evidence type="ECO:0000255" key="1"/>
<evidence type="ECO:0000269" key="2">
    <source>
    </source>
</evidence>
<evidence type="ECO:0000269" key="3">
    <source>
    </source>
</evidence>
<evidence type="ECO:0000305" key="4"/>
<evidence type="ECO:0007829" key="5">
    <source>
        <dbReference type="PDB" id="1P4X"/>
    </source>
</evidence>
<gene>
    <name type="primary">sarS</name>
    <name type="synonym">sarH1</name>
    <name type="ordered locus">SAOUHSC_00070</name>
</gene>